<comment type="function">
    <text evidence="6 7 8">Tyrosine-protein kinase receptor which, together with ddr-1, is involved in axon guidance to establish the tracts for the ventral and dorsal nerve cords during nervous system development (PubMed:23147028). Acts upstream of the adapter shc-1, and the tyrosine kinase receptors svh-1 and svh-2 to regulate axon regeneration following injury in D-type motor neurons (PubMed:27984580, PubMed:31371405). May mediate axon regeneration in association with the collagen emb-9 (PubMed:27984580).</text>
</comment>
<comment type="catalytic activity">
    <reaction evidence="3 7 8">
        <text>L-tyrosyl-[protein] + ATP = O-phospho-L-tyrosyl-[protein] + ADP + H(+)</text>
        <dbReference type="Rhea" id="RHEA:10596"/>
        <dbReference type="Rhea" id="RHEA-COMP:10136"/>
        <dbReference type="Rhea" id="RHEA-COMP:20101"/>
        <dbReference type="ChEBI" id="CHEBI:15378"/>
        <dbReference type="ChEBI" id="CHEBI:30616"/>
        <dbReference type="ChEBI" id="CHEBI:46858"/>
        <dbReference type="ChEBI" id="CHEBI:61978"/>
        <dbReference type="ChEBI" id="CHEBI:456216"/>
        <dbReference type="EC" id="2.7.10.1"/>
    </reaction>
</comment>
<comment type="subunit">
    <text evidence="7">Interacts with shc-1.</text>
</comment>
<comment type="subcellular location">
    <subcellularLocation>
        <location evidence="7">Cell membrane</location>
        <topology evidence="11">Single-pass type I membrane protein</topology>
    </subcellularLocation>
    <subcellularLocation>
        <location evidence="6 7 8">Cell projection</location>
        <location evidence="6 7 8">Axon</location>
    </subcellularLocation>
    <subcellularLocation>
        <location evidence="6">Perikaryon</location>
    </subcellularLocation>
</comment>
<comment type="alternative products">
    <event type="alternative splicing"/>
    <isoform>
        <id>Q95ZV7-1</id>
        <name evidence="13">a</name>
        <sequence type="displayed"/>
    </isoform>
    <isoform>
        <id>Q95ZV7-2</id>
        <name evidence="14">b</name>
        <sequence type="described" ref="VSP_057892"/>
    </isoform>
</comment>
<comment type="tissue specificity">
    <text evidence="6 7">Expressed in some neurons in head and tail, some motoneurons in ventral nerve cord, in PVP interneurons, seam cells, rectal gland cells, vulva cells and some non-neuronal cells in the tail (PubMed:23147028). Expressed in D-type motor neurons (PubMed:27984580).</text>
</comment>
<comment type="developmental stage">
    <text evidence="6">Expression begins during late gastrulation in seam cells and in few head neurons.</text>
</comment>
<comment type="PTM">
    <text evidence="6 8">Autophosphorylated on tyrosine residues.</text>
</comment>
<comment type="PTM">
    <text evidence="8">N-glycosylation at Asn-141 is required for axon regeneration after injury but is dispensable for kinase activity and axon localization.</text>
</comment>
<comment type="disruption phenotype">
    <text evidence="7">Viable. Normal morphology of D-type motor neurons, but 24 hours following injury of D-type motor neurons there is reduced axon regeneration. Double knockout with ddr-1 results in a more enhanced axon regeneration defect of D-type motor neurons as compared to the svh-4 and ddr-1 single mutants.</text>
</comment>
<comment type="similarity">
    <text evidence="11">Belongs to the protein kinase superfamily. Tyr protein kinase family. Insulin receptor subfamily.</text>
</comment>
<keyword id="KW-0025">Alternative splicing</keyword>
<keyword id="KW-0067">ATP-binding</keyword>
<keyword id="KW-1003">Cell membrane</keyword>
<keyword id="KW-0966">Cell projection</keyword>
<keyword id="KW-1015">Disulfide bond</keyword>
<keyword id="KW-0325">Glycoprotein</keyword>
<keyword id="KW-0418">Kinase</keyword>
<keyword id="KW-0472">Membrane</keyword>
<keyword id="KW-0524">Neurogenesis</keyword>
<keyword id="KW-0547">Nucleotide-binding</keyword>
<keyword id="KW-0675">Receptor</keyword>
<keyword id="KW-1185">Reference proteome</keyword>
<keyword id="KW-0677">Repeat</keyword>
<keyword id="KW-0732">Signal</keyword>
<keyword id="KW-0808">Transferase</keyword>
<keyword id="KW-0812">Transmembrane</keyword>
<keyword id="KW-1133">Transmembrane helix</keyword>
<keyword id="KW-0829">Tyrosine-protein kinase</keyword>
<reference evidence="12" key="1">
    <citation type="journal article" date="1998" name="Science">
        <title>Genome sequence of the nematode C. elegans: a platform for investigating biology.</title>
        <authorList>
            <consortium name="The C. elegans sequencing consortium"/>
        </authorList>
    </citation>
    <scope>NUCLEOTIDE SEQUENCE [LARGE SCALE GENOMIC DNA]</scope>
    <source>
        <strain evidence="12">Bristol N2</strain>
    </source>
</reference>
<reference evidence="11" key="2">
    <citation type="journal article" date="2013" name="Dev. Biol.">
        <title>Discoidin domain receptors guide axons along longitudinal tracts in C. elegans.</title>
        <authorList>
            <person name="Unsoeld T."/>
            <person name="Park J.O."/>
            <person name="Hutter H."/>
        </authorList>
    </citation>
    <scope>FUNCTION</scope>
    <scope>SUBCELLULAR LOCATION</scope>
    <scope>TISSUE SPECIFICITY</scope>
    <scope>DEVELOPMENTAL STAGE</scope>
</reference>
<reference key="3">
    <citation type="journal article" date="2016" name="PLoS Genet.">
        <title>The C. elegans discoidin domain receptor DDR-2 modulates the Met-like RTK-JNK signaling pathway in axon regeneration.</title>
        <authorList>
            <person name="Hisamoto N."/>
            <person name="Nagamori Y."/>
            <person name="Shimizu T."/>
            <person name="Pastuhov S.I."/>
            <person name="Matsumoto K."/>
        </authorList>
    </citation>
    <scope>FUNCTION</scope>
    <scope>CATALYTIC ACTIVITY</scope>
    <scope>INTERACTION WITH SHC-1</scope>
    <scope>SUBCELLULAR LOCATION</scope>
    <scope>TISSUE SPECIFICITY</scope>
    <scope>PHOSPHORYLATION</scope>
    <scope>DISRUPTION PHENOTYPE</scope>
    <scope>MUTAGENESIS OF ARG-100 AND LYS-554</scope>
</reference>
<reference key="4">
    <citation type="journal article" date="2019" name="Genetics">
        <title>N-Glycosylation of the Discoidin Domain Receptor Is Required for Axon Regeneration in Caenorhabditis elegans.</title>
        <authorList>
            <person name="Shimizu T."/>
            <person name="Kato Y."/>
            <person name="Sakai Y."/>
            <person name="Hisamoto N."/>
            <person name="Matsumoto K."/>
        </authorList>
    </citation>
    <scope>FUNCTION</scope>
    <scope>CATALYTIC ACTIVITY</scope>
    <scope>SUBCELLULAR LOCATION</scope>
    <scope>PHOSPHORYLATION</scope>
    <scope>GLYCOSYLATION AT ASN-141</scope>
    <scope>MUTAGENESIS OF ASN-141; ASN-167; ASN-264; ASN-353 AND LYS-554</scope>
</reference>
<protein>
    <recommendedName>
        <fullName evidence="11">Discoidin domain-containing receptor tyrosine kinase B</fullName>
        <ecNumber evidence="3 7 8">2.7.10.1</ecNumber>
    </recommendedName>
    <alternativeName>
        <fullName evidence="9">Discoidin domain-containing receptor B</fullName>
    </alternativeName>
</protein>
<name>DDRB_CAEEL</name>
<gene>
    <name evidence="13" type="primary">ddr-2</name>
    <name evidence="10 13" type="synonym">svh-4</name>
    <name evidence="13" type="ORF">F11D5.3</name>
</gene>
<dbReference type="EC" id="2.7.10.1" evidence="3 7 8"/>
<dbReference type="EMBL" id="BX284606">
    <property type="protein sequence ID" value="CCD69233.1"/>
    <property type="molecule type" value="Genomic_DNA"/>
</dbReference>
<dbReference type="EMBL" id="BX284606">
    <property type="protein sequence ID" value="CCD69234.1"/>
    <property type="molecule type" value="Genomic_DNA"/>
</dbReference>
<dbReference type="RefSeq" id="NP_508572.1">
    <molecule id="Q95ZV7-1"/>
    <property type="nucleotide sequence ID" value="NM_076171.7"/>
</dbReference>
<dbReference type="RefSeq" id="NP_508573.1">
    <molecule id="Q95ZV7-2"/>
    <property type="nucleotide sequence ID" value="NM_076172.9"/>
</dbReference>
<dbReference type="SMR" id="Q95ZV7"/>
<dbReference type="DIP" id="DIP-27423N"/>
<dbReference type="FunCoup" id="Q95ZV7">
    <property type="interactions" value="163"/>
</dbReference>
<dbReference type="STRING" id="6239.F11D5.3a.1"/>
<dbReference type="GlyCosmos" id="Q95ZV7">
    <property type="glycosylation" value="4 sites, No reported glycans"/>
</dbReference>
<dbReference type="iPTMnet" id="Q95ZV7"/>
<dbReference type="PaxDb" id="6239-F11D5.3a"/>
<dbReference type="EnsemblMetazoa" id="F11D5.3a.1">
    <molecule id="Q95ZV7-1"/>
    <property type="protein sequence ID" value="F11D5.3a.1"/>
    <property type="gene ID" value="WBGene00017381"/>
</dbReference>
<dbReference type="EnsemblMetazoa" id="F11D5.3b.1">
    <molecule id="Q95ZV7-2"/>
    <property type="protein sequence ID" value="F11D5.3b.1"/>
    <property type="gene ID" value="WBGene00017381"/>
</dbReference>
<dbReference type="EnsemblMetazoa" id="F11D5.3b.2">
    <molecule id="Q95ZV7-2"/>
    <property type="protein sequence ID" value="F11D5.3b.2"/>
    <property type="gene ID" value="WBGene00017381"/>
</dbReference>
<dbReference type="GeneID" id="180622"/>
<dbReference type="KEGG" id="cel:CELE_F11D5.3"/>
<dbReference type="UCSC" id="F11D5.3b.3">
    <property type="organism name" value="c. elegans"/>
</dbReference>
<dbReference type="AGR" id="WB:WBGene00017381"/>
<dbReference type="CTD" id="180622"/>
<dbReference type="WormBase" id="F11D5.3a">
    <molecule id="Q95ZV7-1"/>
    <property type="protein sequence ID" value="CE27950"/>
    <property type="gene ID" value="WBGene00017381"/>
    <property type="gene designation" value="ddr-2"/>
</dbReference>
<dbReference type="WormBase" id="F11D5.3b">
    <molecule id="Q95ZV7-2"/>
    <property type="protein sequence ID" value="CE27951"/>
    <property type="gene ID" value="WBGene00017381"/>
    <property type="gene designation" value="ddr-2"/>
</dbReference>
<dbReference type="eggNOG" id="KOG1094">
    <property type="taxonomic scope" value="Eukaryota"/>
</dbReference>
<dbReference type="GeneTree" id="ENSGT00940000169525"/>
<dbReference type="InParanoid" id="Q95ZV7"/>
<dbReference type="OMA" id="RDAEYQE"/>
<dbReference type="OrthoDB" id="6071166at2759"/>
<dbReference type="PhylomeDB" id="Q95ZV7"/>
<dbReference type="Reactome" id="R-CEL-1257604">
    <property type="pathway name" value="PIP3 activates AKT signaling"/>
</dbReference>
<dbReference type="Reactome" id="R-CEL-1433557">
    <property type="pathway name" value="Signaling by SCF-KIT"/>
</dbReference>
<dbReference type="Reactome" id="R-CEL-1433559">
    <property type="pathway name" value="Regulation of KIT signaling"/>
</dbReference>
<dbReference type="Reactome" id="R-CEL-186763">
    <property type="pathway name" value="Downstream signal transduction"/>
</dbReference>
<dbReference type="Reactome" id="R-CEL-186797">
    <property type="pathway name" value="Signaling by PDGF"/>
</dbReference>
<dbReference type="Reactome" id="R-CEL-216083">
    <property type="pathway name" value="Integrin cell surface interactions"/>
</dbReference>
<dbReference type="Reactome" id="R-CEL-4420097">
    <property type="pathway name" value="VEGFA-VEGFR2 Pathway"/>
</dbReference>
<dbReference type="Reactome" id="R-CEL-5673001">
    <property type="pathway name" value="RAF/MAP kinase cascade"/>
</dbReference>
<dbReference type="Reactome" id="R-CEL-6811558">
    <property type="pathway name" value="PI5P, PP2A and IER3 Regulate PI3K/AKT Signaling"/>
</dbReference>
<dbReference type="Reactome" id="R-CEL-9607240">
    <property type="pathway name" value="FLT3 Signaling"/>
</dbReference>
<dbReference type="PRO" id="PR:Q95ZV7"/>
<dbReference type="Proteomes" id="UP000001940">
    <property type="component" value="Chromosome X"/>
</dbReference>
<dbReference type="Bgee" id="WBGene00017381">
    <property type="expression patterns" value="Expressed in pharyngeal muscle cell (C elegans) and 3 other cell types or tissues"/>
</dbReference>
<dbReference type="GO" id="GO:0030424">
    <property type="term" value="C:axon"/>
    <property type="evidence" value="ECO:0000314"/>
    <property type="project" value="UniProtKB"/>
</dbReference>
<dbReference type="GO" id="GO:0043204">
    <property type="term" value="C:perikaryon"/>
    <property type="evidence" value="ECO:0007669"/>
    <property type="project" value="UniProtKB-SubCell"/>
</dbReference>
<dbReference type="GO" id="GO:0005886">
    <property type="term" value="C:plasma membrane"/>
    <property type="evidence" value="ECO:0000314"/>
    <property type="project" value="UniProtKB"/>
</dbReference>
<dbReference type="GO" id="GO:0043235">
    <property type="term" value="C:receptor complex"/>
    <property type="evidence" value="ECO:0000318"/>
    <property type="project" value="GO_Central"/>
</dbReference>
<dbReference type="GO" id="GO:0005524">
    <property type="term" value="F:ATP binding"/>
    <property type="evidence" value="ECO:0007669"/>
    <property type="project" value="UniProtKB-KW"/>
</dbReference>
<dbReference type="GO" id="GO:0005518">
    <property type="term" value="F:collagen binding"/>
    <property type="evidence" value="ECO:0000318"/>
    <property type="project" value="GO_Central"/>
</dbReference>
<dbReference type="GO" id="GO:0004713">
    <property type="term" value="F:protein tyrosine kinase activity"/>
    <property type="evidence" value="ECO:0000314"/>
    <property type="project" value="UniProtKB"/>
</dbReference>
<dbReference type="GO" id="GO:0038062">
    <property type="term" value="F:protein tyrosine kinase collagen receptor activity"/>
    <property type="evidence" value="ECO:0000318"/>
    <property type="project" value="GO_Central"/>
</dbReference>
<dbReference type="GO" id="GO:0007169">
    <property type="term" value="P:cell surface receptor protein tyrosine kinase signaling pathway"/>
    <property type="evidence" value="ECO:0000318"/>
    <property type="project" value="GO_Central"/>
</dbReference>
<dbReference type="GO" id="GO:0097376">
    <property type="term" value="P:interneuron axon guidance"/>
    <property type="evidence" value="ECO:0000315"/>
    <property type="project" value="UniProtKB"/>
</dbReference>
<dbReference type="GO" id="GO:0008045">
    <property type="term" value="P:motor neuron axon guidance"/>
    <property type="evidence" value="ECO:0000315"/>
    <property type="project" value="UniProtKB"/>
</dbReference>
<dbReference type="GO" id="GO:0018108">
    <property type="term" value="P:peptidyl-tyrosine phosphorylation"/>
    <property type="evidence" value="ECO:0000314"/>
    <property type="project" value="UniProtKB"/>
</dbReference>
<dbReference type="GO" id="GO:0048680">
    <property type="term" value="P:positive regulation of axon regeneration"/>
    <property type="evidence" value="ECO:0000315"/>
    <property type="project" value="UniProtKB"/>
</dbReference>
<dbReference type="GO" id="GO:0010976">
    <property type="term" value="P:positive regulation of neuron projection development"/>
    <property type="evidence" value="ECO:0000318"/>
    <property type="project" value="GO_Central"/>
</dbReference>
<dbReference type="GO" id="GO:0051897">
    <property type="term" value="P:positive regulation of phosphatidylinositol 3-kinase/protein kinase B signal transduction"/>
    <property type="evidence" value="ECO:0000318"/>
    <property type="project" value="GO_Central"/>
</dbReference>
<dbReference type="FunFam" id="3.30.200.20:FF:000908">
    <property type="entry name" value="CBN-DDR-2 protein"/>
    <property type="match status" value="1"/>
</dbReference>
<dbReference type="FunFam" id="2.60.120.260:FF:000007">
    <property type="entry name" value="Discoidin domain receptor tyrosine kinase 1"/>
    <property type="match status" value="1"/>
</dbReference>
<dbReference type="FunFam" id="1.10.510.10:FF:001512">
    <property type="entry name" value="Receptor tyrosine-protein kinase erbB-2"/>
    <property type="match status" value="1"/>
</dbReference>
<dbReference type="Gene3D" id="2.60.120.1190">
    <property type="match status" value="1"/>
</dbReference>
<dbReference type="Gene3D" id="2.60.120.260">
    <property type="entry name" value="Galactose-binding domain-like"/>
    <property type="match status" value="1"/>
</dbReference>
<dbReference type="Gene3D" id="3.30.200.20">
    <property type="entry name" value="Phosphorylase Kinase, domain 1"/>
    <property type="match status" value="1"/>
</dbReference>
<dbReference type="Gene3D" id="1.10.510.10">
    <property type="entry name" value="Transferase(Phosphotransferase) domain 1"/>
    <property type="match status" value="1"/>
</dbReference>
<dbReference type="InterPro" id="IPR048525">
    <property type="entry name" value="DDR1-2_DS-like"/>
</dbReference>
<dbReference type="InterPro" id="IPR000421">
    <property type="entry name" value="FA58C"/>
</dbReference>
<dbReference type="InterPro" id="IPR008979">
    <property type="entry name" value="Galactose-bd-like_sf"/>
</dbReference>
<dbReference type="InterPro" id="IPR011009">
    <property type="entry name" value="Kinase-like_dom_sf"/>
</dbReference>
<dbReference type="InterPro" id="IPR000719">
    <property type="entry name" value="Prot_kinase_dom"/>
</dbReference>
<dbReference type="InterPro" id="IPR050122">
    <property type="entry name" value="RTK"/>
</dbReference>
<dbReference type="InterPro" id="IPR001245">
    <property type="entry name" value="Ser-Thr/Tyr_kinase_cat_dom"/>
</dbReference>
<dbReference type="InterPro" id="IPR008266">
    <property type="entry name" value="Tyr_kinase_AS"/>
</dbReference>
<dbReference type="InterPro" id="IPR020635">
    <property type="entry name" value="Tyr_kinase_cat_dom"/>
</dbReference>
<dbReference type="PANTHER" id="PTHR24416:SF634">
    <property type="entry name" value="DISCOIDIN DOMAIN-CONTAINING RECEPTOR TYROSINE KINASE B"/>
    <property type="match status" value="1"/>
</dbReference>
<dbReference type="PANTHER" id="PTHR24416">
    <property type="entry name" value="TYROSINE-PROTEIN KINASE RECEPTOR"/>
    <property type="match status" value="1"/>
</dbReference>
<dbReference type="Pfam" id="PF21114">
    <property type="entry name" value="DDR1-2_DS-like"/>
    <property type="match status" value="1"/>
</dbReference>
<dbReference type="Pfam" id="PF00754">
    <property type="entry name" value="F5_F8_type_C"/>
    <property type="match status" value="1"/>
</dbReference>
<dbReference type="Pfam" id="PF07714">
    <property type="entry name" value="PK_Tyr_Ser-Thr"/>
    <property type="match status" value="1"/>
</dbReference>
<dbReference type="PRINTS" id="PR00109">
    <property type="entry name" value="TYRKINASE"/>
</dbReference>
<dbReference type="SMART" id="SM00231">
    <property type="entry name" value="FA58C"/>
    <property type="match status" value="1"/>
</dbReference>
<dbReference type="SMART" id="SM00219">
    <property type="entry name" value="TyrKc"/>
    <property type="match status" value="1"/>
</dbReference>
<dbReference type="SUPFAM" id="SSF49785">
    <property type="entry name" value="Galactose-binding domain-like"/>
    <property type="match status" value="1"/>
</dbReference>
<dbReference type="SUPFAM" id="SSF56112">
    <property type="entry name" value="Protein kinase-like (PK-like)"/>
    <property type="match status" value="1"/>
</dbReference>
<dbReference type="PROSITE" id="PS01285">
    <property type="entry name" value="FA58C_1"/>
    <property type="match status" value="1"/>
</dbReference>
<dbReference type="PROSITE" id="PS01286">
    <property type="entry name" value="FA58C_2"/>
    <property type="match status" value="1"/>
</dbReference>
<dbReference type="PROSITE" id="PS50022">
    <property type="entry name" value="FA58C_3"/>
    <property type="match status" value="1"/>
</dbReference>
<dbReference type="PROSITE" id="PS50011">
    <property type="entry name" value="PROTEIN_KINASE_DOM"/>
    <property type="match status" value="1"/>
</dbReference>
<dbReference type="PROSITE" id="PS00109">
    <property type="entry name" value="PROTEIN_KINASE_TYR"/>
    <property type="match status" value="1"/>
</dbReference>
<accession>Q95ZV7</accession>
<accession>Q95ZV6</accession>
<evidence type="ECO:0000255" key="1"/>
<evidence type="ECO:0000255" key="2">
    <source>
        <dbReference type="PROSITE-ProRule" id="PRU00081"/>
    </source>
</evidence>
<evidence type="ECO:0000255" key="3">
    <source>
        <dbReference type="PROSITE-ProRule" id="PRU00159"/>
    </source>
</evidence>
<evidence type="ECO:0000255" key="4">
    <source>
        <dbReference type="PROSITE-ProRule" id="PRU00498"/>
    </source>
</evidence>
<evidence type="ECO:0000256" key="5">
    <source>
        <dbReference type="SAM" id="MobiDB-lite"/>
    </source>
</evidence>
<evidence type="ECO:0000269" key="6">
    <source>
    </source>
</evidence>
<evidence type="ECO:0000269" key="7">
    <source>
    </source>
</evidence>
<evidence type="ECO:0000269" key="8">
    <source>
    </source>
</evidence>
<evidence type="ECO:0000303" key="9">
    <source>
    </source>
</evidence>
<evidence type="ECO:0000303" key="10">
    <source>
    </source>
</evidence>
<evidence type="ECO:0000305" key="11"/>
<evidence type="ECO:0000312" key="12">
    <source>
        <dbReference type="Proteomes" id="UP000001940"/>
    </source>
</evidence>
<evidence type="ECO:0000312" key="13">
    <source>
        <dbReference type="WormBase" id="F11D5.3a"/>
    </source>
</evidence>
<evidence type="ECO:0000312" key="14">
    <source>
        <dbReference type="WormBase" id="F11D5.3b"/>
    </source>
</evidence>
<proteinExistence type="evidence at protein level"/>
<feature type="signal peptide" evidence="1">
    <location>
        <begin position="1"/>
        <end position="19"/>
    </location>
</feature>
<feature type="chain" id="PRO_0000434039" description="Discoidin domain-containing receptor tyrosine kinase B" evidence="11">
    <location>
        <begin position="20"/>
        <end position="797"/>
    </location>
</feature>
<feature type="topological domain" description="Extracellular" evidence="1">
    <location>
        <begin position="20"/>
        <end position="384"/>
    </location>
</feature>
<feature type="transmembrane region" description="Helical" evidence="1">
    <location>
        <begin position="385"/>
        <end position="405"/>
    </location>
</feature>
<feature type="topological domain" description="Cytoplasmic" evidence="1">
    <location>
        <begin position="406"/>
        <end position="797"/>
    </location>
</feature>
<feature type="domain" description="F5/8 type C" evidence="2">
    <location>
        <begin position="25"/>
        <end position="181"/>
    </location>
</feature>
<feature type="domain" description="Protein kinase" evidence="3">
    <location>
        <begin position="527"/>
        <end position="785"/>
    </location>
</feature>
<feature type="region of interest" description="Disordered" evidence="5">
    <location>
        <begin position="46"/>
        <end position="66"/>
    </location>
</feature>
<feature type="active site" description="Proton acceptor" evidence="3">
    <location>
        <position position="645"/>
    </location>
</feature>
<feature type="binding site" evidence="3">
    <location>
        <begin position="533"/>
        <end position="541"/>
    </location>
    <ligand>
        <name>ATP</name>
        <dbReference type="ChEBI" id="CHEBI:30616"/>
    </ligand>
</feature>
<feature type="binding site" evidence="3">
    <location>
        <position position="554"/>
    </location>
    <ligand>
        <name>ATP</name>
        <dbReference type="ChEBI" id="CHEBI:30616"/>
    </ligand>
</feature>
<feature type="site" description="May be required for collagen binding" evidence="10">
    <location>
        <position position="100"/>
    </location>
</feature>
<feature type="glycosylation site" description="N-linked (GlcNAc...) asparagine" evidence="8">
    <location>
        <position position="141"/>
    </location>
</feature>
<feature type="glycosylation site" description="N-linked (GlcNAc...) asparagine" evidence="4">
    <location>
        <position position="167"/>
    </location>
</feature>
<feature type="glycosylation site" description="N-linked (GlcNAc...) asparagine" evidence="4">
    <location>
        <position position="264"/>
    </location>
</feature>
<feature type="glycosylation site" description="N-linked (GlcNAc...) asparagine" evidence="4">
    <location>
        <position position="353"/>
    </location>
</feature>
<feature type="disulfide bond" evidence="2">
    <location>
        <begin position="25"/>
        <end position="181"/>
    </location>
</feature>
<feature type="splice variant" id="VSP_057892" description="In isoform b." evidence="11">
    <location>
        <begin position="1"/>
        <end position="30"/>
    </location>
</feature>
<feature type="mutagenesis site" description="Does not rescue the axon regeneration defect in the svh-4 loss of function mutant (ok564) following injury to D-type motor neurons." evidence="7">
    <original>R</original>
    <variation>A</variation>
    <location>
        <position position="100"/>
    </location>
</feature>
<feature type="mutagenesis site" description="Loss of N-glycosylation. Impairs axon regeneration following axon injury. No effect on axon localization and kinase activity." evidence="8">
    <original>N</original>
    <variation>A</variation>
    <location>
        <position position="141"/>
    </location>
</feature>
<feature type="mutagenesis site" description="Partially impairs axon regeneration following axon injury." evidence="8">
    <original>N</original>
    <variation>A</variation>
    <location>
        <position position="167"/>
    </location>
</feature>
<feature type="mutagenesis site" description="No effect on axon regeneration following axon injury." evidence="8">
    <original>N</original>
    <variation>A</variation>
    <location>
        <position position="264"/>
    </location>
</feature>
<feature type="mutagenesis site" description="No effect on axon regeneration following axon injury." evidence="8">
    <original>N</original>
    <variation>A</variation>
    <location>
        <position position="353"/>
    </location>
</feature>
<feature type="mutagenesis site" description="Abolishes kinase activity and abolishes autophosphorylation. Does not rescue the axon regeneration defect in the svh-4 loss of function mutant (ok564) following injury to D-type motor neurons." evidence="7 8">
    <original>K</original>
    <variation>E</variation>
    <location>
        <position position="554"/>
    </location>
</feature>
<organism evidence="12">
    <name type="scientific">Caenorhabditis elegans</name>
    <dbReference type="NCBI Taxonomy" id="6239"/>
    <lineage>
        <taxon>Eukaryota</taxon>
        <taxon>Metazoa</taxon>
        <taxon>Ecdysozoa</taxon>
        <taxon>Nematoda</taxon>
        <taxon>Chromadorea</taxon>
        <taxon>Rhabditida</taxon>
        <taxon>Rhabditina</taxon>
        <taxon>Rhabditomorpha</taxon>
        <taxon>Rhabditoidea</taxon>
        <taxon>Rhabditidae</taxon>
        <taxon>Peloderinae</taxon>
        <taxon>Caenorhabditis</taxon>
    </lineage>
</organism>
<sequence length="797" mass="90303">MKLLLYLFGVTFHSNTVVALELRECSHQLGMSNRKIRDEQISASSSFDLQSTGPQHARAHQESGSGAWCPKNQINSLSKEWLQISFSVDTVITSVETQGRFDDGRGMEYATAFKIQYWRPSLNAWASYKDDFELETIPANNDTEHAIRRHLDRAIIARRIRIVPVSNSTRTVCMRVEVFGCPFDDSLVFYNVDQGDLQSGISYHDFSYDGNLANSPHLTGGIGKLYDGEVGKNNVFVNHHKWVGWRRKRNGNVKLAFEFSELRNISGILIHTSNEFKKSAKAFSSATVLFSINGKDFSDTIVHFNNPEDTESEVPRWIRIPVNNRIAKVAKIRLNFGTDSDWLFISEVNFESNHTNIELLNDDVVIPDSVSYFSVTEHDDGTSMFAFIIFFFMFLIVAVIILTVLYRKREYRVKASSPSPNAKREILLTIDGNTIKHHVSPSTYQMARDNLQNALIEKMPMSPIISDYAEPDISVCSDVTANTPLLYGIDGPYDTQKRSNPLSSMVKYSDYGEVYCTTLPEIARDKLICVSRIGQGEFGEVDLCQLENRKVAVKKLHGISQADEFSFHREIRVLGSLKHPNVVEVVGVCTIQKPILCIMEYMENGDLKSYILKNPTIQTSQCISICTQLAAGLAYLESCNFVHRDIAARNCLVDGEGNVKIADFGMARSLYSQEYYKVEGKFVLPIRWMAWEALLLGKFSTASDVWGFGVTMWEIFSLCSEKPYSDMTDDDVVENLQSMSSTGSLKQVLSRPRMCPSKLYNEQILPCWNYESSRRPSFENVHLHLQSLVHTSPHIHF</sequence>